<sequence length="550" mass="62258">MLRKQDPMKTAGWKKLSDHFQTMKDVHMRDLFAEDGDRFQRFSIRFGDILVDYSKNRLNQETLLLLLGLAEEVGLKDGVEAMFTGERINETEDRAVLHTALRNRSDAPVFVDGRDVMPEVNAVLKKMEEFSRRVISGRWKGYSGKPVRDIVNIGIGGSDLGPKMVAECLRPYAAKGLSVHFVSNVDGTHIVETLKLLDPETTLFMIASKTFTTQETMTNAHTARDWFLKHAGDPAHIARHFVALSTNTDRVKAFGIDPENMFVFWDWVGGRYSLWSAIGLSVACAIGFEGFLDLLQGAHEMDRHFREEPFERNIPVILALIGIWYNNFFGAESEAVLPYDQYMHRFPAYFQQGNMESNGKSADRGGGRVRHQTGPIIWGEPGTNGQHAFYQLIHQGTKLVPADFLAPALSHNDVGDHHAILLSNFFAQTEALMRGKNREEVIEELRREGRSEDAIQRLWPHKVFEGNKPTNSILFRKLTPRVLGSLIAMYEHKIFVQGVIWNIFSFDQWGVELGKQLAARILPELNDRTTVAAHDSSTNGLINAYKQMRG</sequence>
<gene>
    <name evidence="1" type="primary">pgi</name>
    <name type="ordered locus">Sfum_3591</name>
</gene>
<dbReference type="EC" id="5.3.1.9" evidence="1"/>
<dbReference type="EMBL" id="CP000478">
    <property type="protein sequence ID" value="ABK19261.1"/>
    <property type="molecule type" value="Genomic_DNA"/>
</dbReference>
<dbReference type="RefSeq" id="WP_011700386.1">
    <property type="nucleotide sequence ID" value="NC_008554.1"/>
</dbReference>
<dbReference type="SMR" id="A0LPA9"/>
<dbReference type="FunCoup" id="A0LPA9">
    <property type="interactions" value="495"/>
</dbReference>
<dbReference type="STRING" id="335543.Sfum_3591"/>
<dbReference type="KEGG" id="sfu:Sfum_3591"/>
<dbReference type="eggNOG" id="COG0166">
    <property type="taxonomic scope" value="Bacteria"/>
</dbReference>
<dbReference type="HOGENOM" id="CLU_017947_3_1_7"/>
<dbReference type="InParanoid" id="A0LPA9"/>
<dbReference type="OrthoDB" id="140919at2"/>
<dbReference type="UniPathway" id="UPA00109">
    <property type="reaction ID" value="UER00181"/>
</dbReference>
<dbReference type="UniPathway" id="UPA00138"/>
<dbReference type="Proteomes" id="UP000001784">
    <property type="component" value="Chromosome"/>
</dbReference>
<dbReference type="GO" id="GO:0005829">
    <property type="term" value="C:cytosol"/>
    <property type="evidence" value="ECO:0007669"/>
    <property type="project" value="TreeGrafter"/>
</dbReference>
<dbReference type="GO" id="GO:0097367">
    <property type="term" value="F:carbohydrate derivative binding"/>
    <property type="evidence" value="ECO:0007669"/>
    <property type="project" value="InterPro"/>
</dbReference>
<dbReference type="GO" id="GO:0004347">
    <property type="term" value="F:glucose-6-phosphate isomerase activity"/>
    <property type="evidence" value="ECO:0007669"/>
    <property type="project" value="UniProtKB-UniRule"/>
</dbReference>
<dbReference type="GO" id="GO:0048029">
    <property type="term" value="F:monosaccharide binding"/>
    <property type="evidence" value="ECO:0007669"/>
    <property type="project" value="TreeGrafter"/>
</dbReference>
<dbReference type="GO" id="GO:0006094">
    <property type="term" value="P:gluconeogenesis"/>
    <property type="evidence" value="ECO:0007669"/>
    <property type="project" value="UniProtKB-UniRule"/>
</dbReference>
<dbReference type="GO" id="GO:0051156">
    <property type="term" value="P:glucose 6-phosphate metabolic process"/>
    <property type="evidence" value="ECO:0007669"/>
    <property type="project" value="TreeGrafter"/>
</dbReference>
<dbReference type="GO" id="GO:0006096">
    <property type="term" value="P:glycolytic process"/>
    <property type="evidence" value="ECO:0007669"/>
    <property type="project" value="UniProtKB-UniRule"/>
</dbReference>
<dbReference type="CDD" id="cd05015">
    <property type="entry name" value="SIS_PGI_1"/>
    <property type="match status" value="1"/>
</dbReference>
<dbReference type="CDD" id="cd05016">
    <property type="entry name" value="SIS_PGI_2"/>
    <property type="match status" value="1"/>
</dbReference>
<dbReference type="FunFam" id="1.10.1390.10:FF:000001">
    <property type="entry name" value="Glucose-6-phosphate isomerase"/>
    <property type="match status" value="1"/>
</dbReference>
<dbReference type="FunFam" id="3.40.50.10490:FF:000004">
    <property type="entry name" value="Glucose-6-phosphate isomerase"/>
    <property type="match status" value="1"/>
</dbReference>
<dbReference type="Gene3D" id="1.10.1390.10">
    <property type="match status" value="1"/>
</dbReference>
<dbReference type="Gene3D" id="3.40.50.10490">
    <property type="entry name" value="Glucose-6-phosphate isomerase like protein, domain 1"/>
    <property type="match status" value="2"/>
</dbReference>
<dbReference type="HAMAP" id="MF_00473">
    <property type="entry name" value="G6P_isomerase"/>
    <property type="match status" value="1"/>
</dbReference>
<dbReference type="InterPro" id="IPR001672">
    <property type="entry name" value="G6P_Isomerase"/>
</dbReference>
<dbReference type="InterPro" id="IPR023096">
    <property type="entry name" value="G6P_Isomerase_C"/>
</dbReference>
<dbReference type="InterPro" id="IPR018189">
    <property type="entry name" value="Phosphoglucose_isomerase_CS"/>
</dbReference>
<dbReference type="InterPro" id="IPR046348">
    <property type="entry name" value="SIS_dom_sf"/>
</dbReference>
<dbReference type="InterPro" id="IPR035476">
    <property type="entry name" value="SIS_PGI_1"/>
</dbReference>
<dbReference type="InterPro" id="IPR035482">
    <property type="entry name" value="SIS_PGI_2"/>
</dbReference>
<dbReference type="NCBIfam" id="NF001211">
    <property type="entry name" value="PRK00179.1"/>
    <property type="match status" value="1"/>
</dbReference>
<dbReference type="PANTHER" id="PTHR11469">
    <property type="entry name" value="GLUCOSE-6-PHOSPHATE ISOMERASE"/>
    <property type="match status" value="1"/>
</dbReference>
<dbReference type="PANTHER" id="PTHR11469:SF1">
    <property type="entry name" value="GLUCOSE-6-PHOSPHATE ISOMERASE"/>
    <property type="match status" value="1"/>
</dbReference>
<dbReference type="Pfam" id="PF00342">
    <property type="entry name" value="PGI"/>
    <property type="match status" value="1"/>
</dbReference>
<dbReference type="PRINTS" id="PR00662">
    <property type="entry name" value="G6PISOMERASE"/>
</dbReference>
<dbReference type="SUPFAM" id="SSF53697">
    <property type="entry name" value="SIS domain"/>
    <property type="match status" value="1"/>
</dbReference>
<dbReference type="PROSITE" id="PS00765">
    <property type="entry name" value="P_GLUCOSE_ISOMERASE_1"/>
    <property type="match status" value="1"/>
</dbReference>
<dbReference type="PROSITE" id="PS00174">
    <property type="entry name" value="P_GLUCOSE_ISOMERASE_2"/>
    <property type="match status" value="1"/>
</dbReference>
<dbReference type="PROSITE" id="PS51463">
    <property type="entry name" value="P_GLUCOSE_ISOMERASE_3"/>
    <property type="match status" value="1"/>
</dbReference>
<keyword id="KW-0963">Cytoplasm</keyword>
<keyword id="KW-0312">Gluconeogenesis</keyword>
<keyword id="KW-0324">Glycolysis</keyword>
<keyword id="KW-0413">Isomerase</keyword>
<keyword id="KW-1185">Reference proteome</keyword>
<name>G6PI_SYNFM</name>
<proteinExistence type="inferred from homology"/>
<organism>
    <name type="scientific">Syntrophobacter fumaroxidans (strain DSM 10017 / MPOB)</name>
    <dbReference type="NCBI Taxonomy" id="335543"/>
    <lineage>
        <taxon>Bacteria</taxon>
        <taxon>Pseudomonadati</taxon>
        <taxon>Thermodesulfobacteriota</taxon>
        <taxon>Syntrophobacteria</taxon>
        <taxon>Syntrophobacterales</taxon>
        <taxon>Syntrophobacteraceae</taxon>
        <taxon>Syntrophobacter</taxon>
    </lineage>
</organism>
<reference key="1">
    <citation type="submission" date="2006-10" db="EMBL/GenBank/DDBJ databases">
        <title>Complete sequence of Syntrophobacter fumaroxidans MPOB.</title>
        <authorList>
            <consortium name="US DOE Joint Genome Institute"/>
            <person name="Copeland A."/>
            <person name="Lucas S."/>
            <person name="Lapidus A."/>
            <person name="Barry K."/>
            <person name="Detter J.C."/>
            <person name="Glavina del Rio T."/>
            <person name="Hammon N."/>
            <person name="Israni S."/>
            <person name="Pitluck S."/>
            <person name="Goltsman E.G."/>
            <person name="Martinez M."/>
            <person name="Schmutz J."/>
            <person name="Larimer F."/>
            <person name="Land M."/>
            <person name="Hauser L."/>
            <person name="Kyrpides N."/>
            <person name="Kim E."/>
            <person name="Boone D.R."/>
            <person name="Brockman F."/>
            <person name="Culley D."/>
            <person name="Ferry J."/>
            <person name="Gunsalus R."/>
            <person name="McInerney M.J."/>
            <person name="Morrison M."/>
            <person name="Plugge C."/>
            <person name="Rohlin L."/>
            <person name="Scholten J."/>
            <person name="Sieber J."/>
            <person name="Stams A.J.M."/>
            <person name="Worm P."/>
            <person name="Henstra A.M."/>
            <person name="Richardson P."/>
        </authorList>
    </citation>
    <scope>NUCLEOTIDE SEQUENCE [LARGE SCALE GENOMIC DNA]</scope>
    <source>
        <strain>DSM 10017 / MPOB</strain>
    </source>
</reference>
<accession>A0LPA9</accession>
<feature type="chain" id="PRO_1000014029" description="Glucose-6-phosphate isomerase">
    <location>
        <begin position="1"/>
        <end position="550"/>
    </location>
</feature>
<feature type="active site" description="Proton donor" evidence="1">
    <location>
        <position position="356"/>
    </location>
</feature>
<feature type="active site" evidence="1">
    <location>
        <position position="387"/>
    </location>
</feature>
<feature type="active site" evidence="1">
    <location>
        <position position="515"/>
    </location>
</feature>
<comment type="function">
    <text evidence="1">Catalyzes the reversible isomerization of glucose-6-phosphate to fructose-6-phosphate.</text>
</comment>
<comment type="catalytic activity">
    <reaction evidence="1">
        <text>alpha-D-glucose 6-phosphate = beta-D-fructose 6-phosphate</text>
        <dbReference type="Rhea" id="RHEA:11816"/>
        <dbReference type="ChEBI" id="CHEBI:57634"/>
        <dbReference type="ChEBI" id="CHEBI:58225"/>
        <dbReference type="EC" id="5.3.1.9"/>
    </reaction>
</comment>
<comment type="pathway">
    <text evidence="1">Carbohydrate biosynthesis; gluconeogenesis.</text>
</comment>
<comment type="pathway">
    <text evidence="1">Carbohydrate degradation; glycolysis; D-glyceraldehyde 3-phosphate and glycerone phosphate from D-glucose: step 2/4.</text>
</comment>
<comment type="subcellular location">
    <subcellularLocation>
        <location evidence="1">Cytoplasm</location>
    </subcellularLocation>
</comment>
<comment type="similarity">
    <text evidence="1">Belongs to the GPI family.</text>
</comment>
<evidence type="ECO:0000255" key="1">
    <source>
        <dbReference type="HAMAP-Rule" id="MF_00473"/>
    </source>
</evidence>
<protein>
    <recommendedName>
        <fullName evidence="1">Glucose-6-phosphate isomerase</fullName>
        <shortName evidence="1">GPI</shortName>
        <ecNumber evidence="1">5.3.1.9</ecNumber>
    </recommendedName>
    <alternativeName>
        <fullName evidence="1">Phosphoglucose isomerase</fullName>
        <shortName evidence="1">PGI</shortName>
    </alternativeName>
    <alternativeName>
        <fullName evidence="1">Phosphohexose isomerase</fullName>
        <shortName evidence="1">PHI</shortName>
    </alternativeName>
</protein>